<sequence>MKKQRLEGIGKEIMRVISKVLLEEVKNPKIKGLVSVTEVDVTEDLKFADTYFSILPPLKSDEKKYDHEEILEALNEIKGFLRKRVAEEVDIRYTPEIRVKLDNSMENAIKITKLLNDLKV</sequence>
<evidence type="ECO:0000255" key="1">
    <source>
        <dbReference type="HAMAP-Rule" id="MF_00003"/>
    </source>
</evidence>
<protein>
    <recommendedName>
        <fullName evidence="1">Ribosome-binding factor A</fullName>
    </recommendedName>
</protein>
<name>RBFA_FUSNN</name>
<reference key="1">
    <citation type="journal article" date="2002" name="J. Bacteriol.">
        <title>Genome sequence and analysis of the oral bacterium Fusobacterium nucleatum strain ATCC 25586.</title>
        <authorList>
            <person name="Kapatral V."/>
            <person name="Anderson I."/>
            <person name="Ivanova N."/>
            <person name="Reznik G."/>
            <person name="Los T."/>
            <person name="Lykidis A."/>
            <person name="Bhattacharyya A."/>
            <person name="Bartman A."/>
            <person name="Gardner W."/>
            <person name="Grechkin G."/>
            <person name="Zhu L."/>
            <person name="Vasieva O."/>
            <person name="Chu L."/>
            <person name="Kogan Y."/>
            <person name="Chaga O."/>
            <person name="Goltsman E."/>
            <person name="Bernal A."/>
            <person name="Larsen N."/>
            <person name="D'Souza M."/>
            <person name="Walunas T."/>
            <person name="Pusch G."/>
            <person name="Haselkorn R."/>
            <person name="Fonstein M."/>
            <person name="Kyrpides N.C."/>
            <person name="Overbeek R."/>
        </authorList>
    </citation>
    <scope>NUCLEOTIDE SEQUENCE [LARGE SCALE GENOMIC DNA]</scope>
    <source>
        <strain>ATCC 25586 / DSM 15643 / BCRC 10681 / CIP 101130 / JCM 8532 / KCTC 2640 / LMG 13131 / VPI 4355</strain>
    </source>
</reference>
<organism>
    <name type="scientific">Fusobacterium nucleatum subsp. nucleatum (strain ATCC 25586 / DSM 15643 / BCRC 10681 / CIP 101130 / JCM 8532 / KCTC 2640 / LMG 13131 / VPI 4355)</name>
    <dbReference type="NCBI Taxonomy" id="190304"/>
    <lineage>
        <taxon>Bacteria</taxon>
        <taxon>Fusobacteriati</taxon>
        <taxon>Fusobacteriota</taxon>
        <taxon>Fusobacteriia</taxon>
        <taxon>Fusobacteriales</taxon>
        <taxon>Fusobacteriaceae</taxon>
        <taxon>Fusobacterium</taxon>
    </lineage>
</organism>
<proteinExistence type="inferred from homology"/>
<comment type="function">
    <text evidence="1">One of several proteins that assist in the late maturation steps of the functional core of the 30S ribosomal subunit. Associates with free 30S ribosomal subunits (but not with 30S subunits that are part of 70S ribosomes or polysomes). Required for efficient processing of 16S rRNA. May interact with the 5'-terminal helix region of 16S rRNA.</text>
</comment>
<comment type="subunit">
    <text evidence="1">Monomer. Binds 30S ribosomal subunits, but not 50S ribosomal subunits or 70S ribosomes.</text>
</comment>
<comment type="subcellular location">
    <subcellularLocation>
        <location evidence="1">Cytoplasm</location>
    </subcellularLocation>
</comment>
<comment type="similarity">
    <text evidence="1">Belongs to the RbfA family.</text>
</comment>
<keyword id="KW-0963">Cytoplasm</keyword>
<keyword id="KW-1185">Reference proteome</keyword>
<keyword id="KW-0690">Ribosome biogenesis</keyword>
<dbReference type="EMBL" id="AE009951">
    <property type="protein sequence ID" value="AAL94109.1"/>
    <property type="molecule type" value="Genomic_DNA"/>
</dbReference>
<dbReference type="RefSeq" id="NP_602810.1">
    <property type="nucleotide sequence ID" value="NC_003454.1"/>
</dbReference>
<dbReference type="RefSeq" id="WP_005903343.1">
    <property type="nucleotide sequence ID" value="NZ_OZ209243.1"/>
</dbReference>
<dbReference type="SMR" id="Q8RHJ7"/>
<dbReference type="FunCoup" id="Q8RHJ7">
    <property type="interactions" value="342"/>
</dbReference>
<dbReference type="STRING" id="190304.FN2019"/>
<dbReference type="PaxDb" id="190304-FN2019"/>
<dbReference type="EnsemblBacteria" id="AAL94109">
    <property type="protein sequence ID" value="AAL94109"/>
    <property type="gene ID" value="FN2019"/>
</dbReference>
<dbReference type="GeneID" id="79782974"/>
<dbReference type="KEGG" id="fnu:FN2019"/>
<dbReference type="PATRIC" id="fig|190304.8.peg.487"/>
<dbReference type="eggNOG" id="COG0858">
    <property type="taxonomic scope" value="Bacteria"/>
</dbReference>
<dbReference type="HOGENOM" id="CLU_089475_6_3_0"/>
<dbReference type="InParanoid" id="Q8RHJ7"/>
<dbReference type="BioCyc" id="FNUC190304:G1FZS-506-MONOMER"/>
<dbReference type="Proteomes" id="UP000002521">
    <property type="component" value="Chromosome"/>
</dbReference>
<dbReference type="GO" id="GO:0005829">
    <property type="term" value="C:cytosol"/>
    <property type="evidence" value="ECO:0000318"/>
    <property type="project" value="GO_Central"/>
</dbReference>
<dbReference type="GO" id="GO:0043024">
    <property type="term" value="F:ribosomal small subunit binding"/>
    <property type="evidence" value="ECO:0000318"/>
    <property type="project" value="GO_Central"/>
</dbReference>
<dbReference type="GO" id="GO:0030490">
    <property type="term" value="P:maturation of SSU-rRNA"/>
    <property type="evidence" value="ECO:0007669"/>
    <property type="project" value="UniProtKB-UniRule"/>
</dbReference>
<dbReference type="GO" id="GO:0042254">
    <property type="term" value="P:ribosome biogenesis"/>
    <property type="evidence" value="ECO:0000318"/>
    <property type="project" value="GO_Central"/>
</dbReference>
<dbReference type="FunFam" id="3.30.300.20:FF:000055">
    <property type="entry name" value="Ribosome-binding factor A"/>
    <property type="match status" value="1"/>
</dbReference>
<dbReference type="Gene3D" id="3.30.300.20">
    <property type="match status" value="1"/>
</dbReference>
<dbReference type="HAMAP" id="MF_00003">
    <property type="entry name" value="RbfA"/>
    <property type="match status" value="1"/>
</dbReference>
<dbReference type="InterPro" id="IPR015946">
    <property type="entry name" value="KH_dom-like_a/b"/>
</dbReference>
<dbReference type="InterPro" id="IPR000238">
    <property type="entry name" value="RbfA"/>
</dbReference>
<dbReference type="InterPro" id="IPR023799">
    <property type="entry name" value="RbfA_dom_sf"/>
</dbReference>
<dbReference type="NCBIfam" id="TIGR00082">
    <property type="entry name" value="rbfA"/>
    <property type="match status" value="1"/>
</dbReference>
<dbReference type="PANTHER" id="PTHR33515">
    <property type="entry name" value="RIBOSOME-BINDING FACTOR A, CHLOROPLASTIC-RELATED"/>
    <property type="match status" value="1"/>
</dbReference>
<dbReference type="PANTHER" id="PTHR33515:SF1">
    <property type="entry name" value="RIBOSOME-BINDING FACTOR A, CHLOROPLASTIC-RELATED"/>
    <property type="match status" value="1"/>
</dbReference>
<dbReference type="Pfam" id="PF02033">
    <property type="entry name" value="RBFA"/>
    <property type="match status" value="1"/>
</dbReference>
<dbReference type="SUPFAM" id="SSF89919">
    <property type="entry name" value="Ribosome-binding factor A, RbfA"/>
    <property type="match status" value="1"/>
</dbReference>
<gene>
    <name evidence="1" type="primary">rbfA</name>
    <name type="ordered locus">FN2019</name>
</gene>
<feature type="chain" id="PRO_0000102664" description="Ribosome-binding factor A">
    <location>
        <begin position="1"/>
        <end position="120"/>
    </location>
</feature>
<accession>Q8RHJ7</accession>